<sequence length="250" mass="25936">MKKLMAANWKMYKTPQEAALTAGELVKAVGTVPDDREVLVFPPFVGLAQVAQAFSGVAGFYCGAQNVYPADEGAYTGEISPGMIVSTGAAWALTGHSERRSVLGESSAFVGQKTAFCLEKGLNVVLCIGETLEEREGGQLEKVLRGQLSEGLSGVPAGIAPERLAIAYEPVWAIGTGKVAGTAEIAATHAVVRGMLRELLPAAADSMRILYGGSVKPDNAAAIISLDNVDGVLVGGASLQAESFSRIILA</sequence>
<accession>Q30ZW0</accession>
<dbReference type="EC" id="5.3.1.1" evidence="1"/>
<dbReference type="EMBL" id="CP000112">
    <property type="protein sequence ID" value="ABB38786.1"/>
    <property type="molecule type" value="Genomic_DNA"/>
</dbReference>
<dbReference type="RefSeq" id="WP_011367895.1">
    <property type="nucleotide sequence ID" value="NC_007519.1"/>
</dbReference>
<dbReference type="SMR" id="Q30ZW0"/>
<dbReference type="STRING" id="207559.Dde_1989"/>
<dbReference type="KEGG" id="dde:Dde_1989"/>
<dbReference type="eggNOG" id="COG0149">
    <property type="taxonomic scope" value="Bacteria"/>
</dbReference>
<dbReference type="HOGENOM" id="CLU_024251_2_0_7"/>
<dbReference type="UniPathway" id="UPA00109">
    <property type="reaction ID" value="UER00189"/>
</dbReference>
<dbReference type="UniPathway" id="UPA00138"/>
<dbReference type="Proteomes" id="UP000002710">
    <property type="component" value="Chromosome"/>
</dbReference>
<dbReference type="GO" id="GO:0005829">
    <property type="term" value="C:cytosol"/>
    <property type="evidence" value="ECO:0007669"/>
    <property type="project" value="TreeGrafter"/>
</dbReference>
<dbReference type="GO" id="GO:0004807">
    <property type="term" value="F:triose-phosphate isomerase activity"/>
    <property type="evidence" value="ECO:0007669"/>
    <property type="project" value="UniProtKB-UniRule"/>
</dbReference>
<dbReference type="GO" id="GO:0006094">
    <property type="term" value="P:gluconeogenesis"/>
    <property type="evidence" value="ECO:0007669"/>
    <property type="project" value="UniProtKB-UniRule"/>
</dbReference>
<dbReference type="GO" id="GO:0046166">
    <property type="term" value="P:glyceraldehyde-3-phosphate biosynthetic process"/>
    <property type="evidence" value="ECO:0007669"/>
    <property type="project" value="TreeGrafter"/>
</dbReference>
<dbReference type="GO" id="GO:0019563">
    <property type="term" value="P:glycerol catabolic process"/>
    <property type="evidence" value="ECO:0007669"/>
    <property type="project" value="TreeGrafter"/>
</dbReference>
<dbReference type="GO" id="GO:0006096">
    <property type="term" value="P:glycolytic process"/>
    <property type="evidence" value="ECO:0007669"/>
    <property type="project" value="UniProtKB-UniRule"/>
</dbReference>
<dbReference type="CDD" id="cd00311">
    <property type="entry name" value="TIM"/>
    <property type="match status" value="1"/>
</dbReference>
<dbReference type="FunFam" id="3.20.20.70:FF:000016">
    <property type="entry name" value="Triosephosphate isomerase"/>
    <property type="match status" value="1"/>
</dbReference>
<dbReference type="Gene3D" id="3.20.20.70">
    <property type="entry name" value="Aldolase class I"/>
    <property type="match status" value="1"/>
</dbReference>
<dbReference type="HAMAP" id="MF_00147_B">
    <property type="entry name" value="TIM_B"/>
    <property type="match status" value="1"/>
</dbReference>
<dbReference type="InterPro" id="IPR013785">
    <property type="entry name" value="Aldolase_TIM"/>
</dbReference>
<dbReference type="InterPro" id="IPR035990">
    <property type="entry name" value="TIM_sf"/>
</dbReference>
<dbReference type="InterPro" id="IPR022896">
    <property type="entry name" value="TrioseP_Isoase_bac/euk"/>
</dbReference>
<dbReference type="InterPro" id="IPR000652">
    <property type="entry name" value="Triosephosphate_isomerase"/>
</dbReference>
<dbReference type="InterPro" id="IPR020861">
    <property type="entry name" value="Triosephosphate_isomerase_AS"/>
</dbReference>
<dbReference type="NCBIfam" id="TIGR00419">
    <property type="entry name" value="tim"/>
    <property type="match status" value="1"/>
</dbReference>
<dbReference type="PANTHER" id="PTHR21139">
    <property type="entry name" value="TRIOSEPHOSPHATE ISOMERASE"/>
    <property type="match status" value="1"/>
</dbReference>
<dbReference type="PANTHER" id="PTHR21139:SF42">
    <property type="entry name" value="TRIOSEPHOSPHATE ISOMERASE"/>
    <property type="match status" value="1"/>
</dbReference>
<dbReference type="Pfam" id="PF00121">
    <property type="entry name" value="TIM"/>
    <property type="match status" value="1"/>
</dbReference>
<dbReference type="SUPFAM" id="SSF51351">
    <property type="entry name" value="Triosephosphate isomerase (TIM)"/>
    <property type="match status" value="1"/>
</dbReference>
<dbReference type="PROSITE" id="PS00171">
    <property type="entry name" value="TIM_1"/>
    <property type="match status" value="1"/>
</dbReference>
<dbReference type="PROSITE" id="PS51440">
    <property type="entry name" value="TIM_2"/>
    <property type="match status" value="1"/>
</dbReference>
<keyword id="KW-0963">Cytoplasm</keyword>
<keyword id="KW-0312">Gluconeogenesis</keyword>
<keyword id="KW-0324">Glycolysis</keyword>
<keyword id="KW-0413">Isomerase</keyword>
<keyword id="KW-1185">Reference proteome</keyword>
<comment type="function">
    <text evidence="1">Involved in the gluconeogenesis. Catalyzes stereospecifically the conversion of dihydroxyacetone phosphate (DHAP) to D-glyceraldehyde-3-phosphate (G3P).</text>
</comment>
<comment type="catalytic activity">
    <reaction evidence="1">
        <text>D-glyceraldehyde 3-phosphate = dihydroxyacetone phosphate</text>
        <dbReference type="Rhea" id="RHEA:18585"/>
        <dbReference type="ChEBI" id="CHEBI:57642"/>
        <dbReference type="ChEBI" id="CHEBI:59776"/>
        <dbReference type="EC" id="5.3.1.1"/>
    </reaction>
</comment>
<comment type="pathway">
    <text evidence="1">Carbohydrate biosynthesis; gluconeogenesis.</text>
</comment>
<comment type="pathway">
    <text evidence="1">Carbohydrate degradation; glycolysis; D-glyceraldehyde 3-phosphate from glycerone phosphate: step 1/1.</text>
</comment>
<comment type="subunit">
    <text evidence="1">Homodimer.</text>
</comment>
<comment type="subcellular location">
    <subcellularLocation>
        <location evidence="1">Cytoplasm</location>
    </subcellularLocation>
</comment>
<comment type="similarity">
    <text evidence="1">Belongs to the triosephosphate isomerase family.</text>
</comment>
<organism>
    <name type="scientific">Oleidesulfovibrio alaskensis (strain ATCC BAA-1058 / DSM 17464 / G20)</name>
    <name type="common">Desulfovibrio alaskensis</name>
    <dbReference type="NCBI Taxonomy" id="207559"/>
    <lineage>
        <taxon>Bacteria</taxon>
        <taxon>Pseudomonadati</taxon>
        <taxon>Thermodesulfobacteriota</taxon>
        <taxon>Desulfovibrionia</taxon>
        <taxon>Desulfovibrionales</taxon>
        <taxon>Desulfovibrionaceae</taxon>
        <taxon>Oleidesulfovibrio</taxon>
    </lineage>
</organism>
<name>TPIS_OLEA2</name>
<evidence type="ECO:0000255" key="1">
    <source>
        <dbReference type="HAMAP-Rule" id="MF_00147"/>
    </source>
</evidence>
<protein>
    <recommendedName>
        <fullName evidence="1">Triosephosphate isomerase</fullName>
        <shortName evidence="1">TIM</shortName>
        <shortName evidence="1">TPI</shortName>
        <ecNumber evidence="1">5.3.1.1</ecNumber>
    </recommendedName>
    <alternativeName>
        <fullName evidence="1">Triose-phosphate isomerase</fullName>
    </alternativeName>
</protein>
<gene>
    <name evidence="1" type="primary">tpiA</name>
    <name type="ordered locus">Dde_1989</name>
</gene>
<feature type="chain" id="PRO_1000071483" description="Triosephosphate isomerase">
    <location>
        <begin position="1"/>
        <end position="250"/>
    </location>
</feature>
<feature type="active site" description="Electrophile" evidence="1">
    <location>
        <position position="96"/>
    </location>
</feature>
<feature type="active site" description="Proton acceptor" evidence="1">
    <location>
        <position position="169"/>
    </location>
</feature>
<feature type="binding site" evidence="1">
    <location>
        <begin position="8"/>
        <end position="10"/>
    </location>
    <ligand>
        <name>substrate</name>
    </ligand>
</feature>
<feature type="binding site" evidence="1">
    <location>
        <position position="175"/>
    </location>
    <ligand>
        <name>substrate</name>
    </ligand>
</feature>
<feature type="binding site" evidence="1">
    <location>
        <position position="214"/>
    </location>
    <ligand>
        <name>substrate</name>
    </ligand>
</feature>
<feature type="binding site" evidence="1">
    <location>
        <begin position="235"/>
        <end position="236"/>
    </location>
    <ligand>
        <name>substrate</name>
    </ligand>
</feature>
<reference key="1">
    <citation type="journal article" date="2011" name="J. Bacteriol.">
        <title>Complete genome sequence and updated annotation of Desulfovibrio alaskensis G20.</title>
        <authorList>
            <person name="Hauser L.J."/>
            <person name="Land M.L."/>
            <person name="Brown S.D."/>
            <person name="Larimer F."/>
            <person name="Keller K.L."/>
            <person name="Rapp-Giles B.J."/>
            <person name="Price M.N."/>
            <person name="Lin M."/>
            <person name="Bruce D.C."/>
            <person name="Detter J.C."/>
            <person name="Tapia R."/>
            <person name="Han C.S."/>
            <person name="Goodwin L.A."/>
            <person name="Cheng J.F."/>
            <person name="Pitluck S."/>
            <person name="Copeland A."/>
            <person name="Lucas S."/>
            <person name="Nolan M."/>
            <person name="Lapidus A.L."/>
            <person name="Palumbo A.V."/>
            <person name="Wall J.D."/>
        </authorList>
    </citation>
    <scope>NUCLEOTIDE SEQUENCE [LARGE SCALE GENOMIC DNA]</scope>
    <source>
        <strain>ATCC BAA-1058 / DSM 17464 / G20</strain>
    </source>
</reference>
<proteinExistence type="inferred from homology"/>